<protein>
    <recommendedName>
        <fullName evidence="1">Aspartate--ammonia ligase</fullName>
        <ecNumber evidence="1">6.3.1.1</ecNumber>
    </recommendedName>
    <alternativeName>
        <fullName evidence="1">Asparagine synthetase A</fullName>
    </alternativeName>
</protein>
<proteinExistence type="inferred from homology"/>
<sequence length="345" mass="40120">MSYLIKPKNYKPLLDLKQTELGIKQIKEFFQLNLSSELRLRRVTAPLFVLKGMGINDDLNGIERPVSFPIKDLGDAQAEVVHSLAKWKRLTLADYNIEPGYGIYTDMNAIRSDEELGNLHSLYVDQWDWERVITNEDRNVEFLKEIVNRIYAAMIRTEYMVYEMYPQIKPCLPQKLHFIHSEELRQLYPNLEPKCREHAICQKYGAVFIIGIGCKLSDGKKHDGRAPDYDDYTSTGLNNLPGLNGDLLLWDDVLQRSIELSSMGVRVDREALQRQLKEENEEERLKLYFHKRLMDDTLPLSIGGGIGQSRLCMFYLRKAHIGEIQASIWPEDMRKECEELDIHLI</sequence>
<evidence type="ECO:0000255" key="1">
    <source>
        <dbReference type="HAMAP-Rule" id="MF_00555"/>
    </source>
</evidence>
<accession>Q8A5V7</accession>
<comment type="catalytic activity">
    <reaction evidence="1">
        <text>L-aspartate + NH4(+) + ATP = L-asparagine + AMP + diphosphate + H(+)</text>
        <dbReference type="Rhea" id="RHEA:11372"/>
        <dbReference type="ChEBI" id="CHEBI:15378"/>
        <dbReference type="ChEBI" id="CHEBI:28938"/>
        <dbReference type="ChEBI" id="CHEBI:29991"/>
        <dbReference type="ChEBI" id="CHEBI:30616"/>
        <dbReference type="ChEBI" id="CHEBI:33019"/>
        <dbReference type="ChEBI" id="CHEBI:58048"/>
        <dbReference type="ChEBI" id="CHEBI:456215"/>
        <dbReference type="EC" id="6.3.1.1"/>
    </reaction>
</comment>
<comment type="pathway">
    <text evidence="1">Amino-acid biosynthesis; L-asparagine biosynthesis; L-asparagine from L-aspartate (ammonia route): step 1/1.</text>
</comment>
<comment type="subcellular location">
    <subcellularLocation>
        <location evidence="1">Cytoplasm</location>
    </subcellularLocation>
</comment>
<comment type="similarity">
    <text evidence="1">Belongs to the class-II aminoacyl-tRNA synthetase family. AsnA subfamily.</text>
</comment>
<name>ASNA_BACTN</name>
<reference key="1">
    <citation type="journal article" date="2003" name="Science">
        <title>A genomic view of the human-Bacteroides thetaiotaomicron symbiosis.</title>
        <authorList>
            <person name="Xu J."/>
            <person name="Bjursell M.K."/>
            <person name="Himrod J."/>
            <person name="Deng S."/>
            <person name="Carmichael L.K."/>
            <person name="Chiang H.C."/>
            <person name="Hooper L.V."/>
            <person name="Gordon J.I."/>
        </authorList>
    </citation>
    <scope>NUCLEOTIDE SEQUENCE [LARGE SCALE GENOMIC DNA]</scope>
    <source>
        <strain>ATCC 29148 / DSM 2079 / JCM 5827 / CCUG 10774 / NCTC 10582 / VPI-5482 / E50</strain>
    </source>
</reference>
<gene>
    <name evidence="1" type="primary">asnA</name>
    <name type="ordered locus">BT_2129</name>
</gene>
<feature type="chain" id="PRO_0000195870" description="Aspartate--ammonia ligase">
    <location>
        <begin position="1"/>
        <end position="345"/>
    </location>
</feature>
<dbReference type="EC" id="6.3.1.1" evidence="1"/>
<dbReference type="EMBL" id="AE015928">
    <property type="protein sequence ID" value="AAO77236.1"/>
    <property type="molecule type" value="Genomic_DNA"/>
</dbReference>
<dbReference type="RefSeq" id="NP_811042.1">
    <property type="nucleotide sequence ID" value="NC_004663.1"/>
</dbReference>
<dbReference type="RefSeq" id="WP_011108145.1">
    <property type="nucleotide sequence ID" value="NC_004663.1"/>
</dbReference>
<dbReference type="SMR" id="Q8A5V7"/>
<dbReference type="FunCoup" id="Q8A5V7">
    <property type="interactions" value="140"/>
</dbReference>
<dbReference type="STRING" id="226186.BT_2129"/>
<dbReference type="PaxDb" id="226186-BT_2129"/>
<dbReference type="EnsemblBacteria" id="AAO77236">
    <property type="protein sequence ID" value="AAO77236"/>
    <property type="gene ID" value="BT_2129"/>
</dbReference>
<dbReference type="GeneID" id="60928118"/>
<dbReference type="KEGG" id="bth:BT_2129"/>
<dbReference type="PATRIC" id="fig|226186.12.peg.2191"/>
<dbReference type="eggNOG" id="COG2502">
    <property type="taxonomic scope" value="Bacteria"/>
</dbReference>
<dbReference type="HOGENOM" id="CLU_071543_0_0_10"/>
<dbReference type="InParanoid" id="Q8A5V7"/>
<dbReference type="OrthoDB" id="9766088at2"/>
<dbReference type="UniPathway" id="UPA00134">
    <property type="reaction ID" value="UER00194"/>
</dbReference>
<dbReference type="Proteomes" id="UP000001414">
    <property type="component" value="Chromosome"/>
</dbReference>
<dbReference type="GO" id="GO:0005829">
    <property type="term" value="C:cytosol"/>
    <property type="evidence" value="ECO:0000318"/>
    <property type="project" value="GO_Central"/>
</dbReference>
<dbReference type="GO" id="GO:0004071">
    <property type="term" value="F:aspartate-ammonia ligase activity"/>
    <property type="evidence" value="ECO:0000318"/>
    <property type="project" value="GO_Central"/>
</dbReference>
<dbReference type="GO" id="GO:0005524">
    <property type="term" value="F:ATP binding"/>
    <property type="evidence" value="ECO:0007669"/>
    <property type="project" value="UniProtKB-UniRule"/>
</dbReference>
<dbReference type="GO" id="GO:0006529">
    <property type="term" value="P:asparagine biosynthetic process"/>
    <property type="evidence" value="ECO:0000318"/>
    <property type="project" value="GO_Central"/>
</dbReference>
<dbReference type="GO" id="GO:0070981">
    <property type="term" value="P:L-asparagine biosynthetic process"/>
    <property type="evidence" value="ECO:0007669"/>
    <property type="project" value="UniProtKB-UniRule"/>
</dbReference>
<dbReference type="CDD" id="cd00645">
    <property type="entry name" value="AsnA"/>
    <property type="match status" value="1"/>
</dbReference>
<dbReference type="Gene3D" id="3.30.930.10">
    <property type="entry name" value="Bira Bifunctional Protein, Domain 2"/>
    <property type="match status" value="1"/>
</dbReference>
<dbReference type="HAMAP" id="MF_00555">
    <property type="entry name" value="AsnA"/>
    <property type="match status" value="1"/>
</dbReference>
<dbReference type="InterPro" id="IPR006195">
    <property type="entry name" value="aa-tRNA-synth_II"/>
</dbReference>
<dbReference type="InterPro" id="IPR045864">
    <property type="entry name" value="aa-tRNA-synth_II/BPL/LPL"/>
</dbReference>
<dbReference type="InterPro" id="IPR004618">
    <property type="entry name" value="AsnA"/>
</dbReference>
<dbReference type="NCBIfam" id="TIGR00669">
    <property type="entry name" value="asnA"/>
    <property type="match status" value="1"/>
</dbReference>
<dbReference type="PANTHER" id="PTHR30073">
    <property type="entry name" value="ASPARTATE--AMMONIA LIGASE"/>
    <property type="match status" value="1"/>
</dbReference>
<dbReference type="PANTHER" id="PTHR30073:SF5">
    <property type="entry name" value="ASPARTATE--AMMONIA LIGASE"/>
    <property type="match status" value="1"/>
</dbReference>
<dbReference type="Pfam" id="PF03590">
    <property type="entry name" value="AsnA"/>
    <property type="match status" value="1"/>
</dbReference>
<dbReference type="PIRSF" id="PIRSF001555">
    <property type="entry name" value="Asp_ammon_ligase"/>
    <property type="match status" value="1"/>
</dbReference>
<dbReference type="SUPFAM" id="SSF55681">
    <property type="entry name" value="Class II aaRS and biotin synthetases"/>
    <property type="match status" value="1"/>
</dbReference>
<dbReference type="PROSITE" id="PS50862">
    <property type="entry name" value="AA_TRNA_LIGASE_II"/>
    <property type="match status" value="1"/>
</dbReference>
<keyword id="KW-0028">Amino-acid biosynthesis</keyword>
<keyword id="KW-0061">Asparagine biosynthesis</keyword>
<keyword id="KW-0067">ATP-binding</keyword>
<keyword id="KW-0963">Cytoplasm</keyword>
<keyword id="KW-0436">Ligase</keyword>
<keyword id="KW-0547">Nucleotide-binding</keyword>
<keyword id="KW-1185">Reference proteome</keyword>
<organism>
    <name type="scientific">Bacteroides thetaiotaomicron (strain ATCC 29148 / DSM 2079 / JCM 5827 / CCUG 10774 / NCTC 10582 / VPI-5482 / E50)</name>
    <dbReference type="NCBI Taxonomy" id="226186"/>
    <lineage>
        <taxon>Bacteria</taxon>
        <taxon>Pseudomonadati</taxon>
        <taxon>Bacteroidota</taxon>
        <taxon>Bacteroidia</taxon>
        <taxon>Bacteroidales</taxon>
        <taxon>Bacteroidaceae</taxon>
        <taxon>Bacteroides</taxon>
    </lineage>
</organism>